<feature type="chain" id="PRO_1000024256" description="Biosynthetic arginine decarboxylase">
    <location>
        <begin position="1"/>
        <end position="630"/>
    </location>
</feature>
<feature type="binding site" evidence="1">
    <location>
        <begin position="281"/>
        <end position="291"/>
    </location>
    <ligand>
        <name>substrate</name>
    </ligand>
</feature>
<feature type="modified residue" description="N6-(pyridoxal phosphate)lysine" evidence="1">
    <location>
        <position position="99"/>
    </location>
</feature>
<proteinExistence type="inferred from homology"/>
<evidence type="ECO:0000255" key="1">
    <source>
        <dbReference type="HAMAP-Rule" id="MF_01417"/>
    </source>
</evidence>
<dbReference type="EC" id="4.1.1.19" evidence="1"/>
<dbReference type="EMBL" id="CP000139">
    <property type="protein sequence ID" value="ABR39026.1"/>
    <property type="molecule type" value="Genomic_DNA"/>
</dbReference>
<dbReference type="RefSeq" id="WP_005838815.1">
    <property type="nucleotide sequence ID" value="NZ_JANSWM010000103.1"/>
</dbReference>
<dbReference type="SMR" id="A6L012"/>
<dbReference type="STRING" id="435590.BVU_1337"/>
<dbReference type="PaxDb" id="435590-BVU_1337"/>
<dbReference type="GeneID" id="93445211"/>
<dbReference type="KEGG" id="bvu:BVU_1337"/>
<dbReference type="eggNOG" id="COG1166">
    <property type="taxonomic scope" value="Bacteria"/>
</dbReference>
<dbReference type="HOGENOM" id="CLU_027243_1_0_10"/>
<dbReference type="BioCyc" id="BVUL435590:G1G59-1395-MONOMER"/>
<dbReference type="UniPathway" id="UPA00186">
    <property type="reaction ID" value="UER00284"/>
</dbReference>
<dbReference type="Proteomes" id="UP000002861">
    <property type="component" value="Chromosome"/>
</dbReference>
<dbReference type="GO" id="GO:0008792">
    <property type="term" value="F:arginine decarboxylase activity"/>
    <property type="evidence" value="ECO:0007669"/>
    <property type="project" value="UniProtKB-UniRule"/>
</dbReference>
<dbReference type="GO" id="GO:0046872">
    <property type="term" value="F:metal ion binding"/>
    <property type="evidence" value="ECO:0007669"/>
    <property type="project" value="UniProtKB-KW"/>
</dbReference>
<dbReference type="GO" id="GO:0006527">
    <property type="term" value="P:arginine catabolic process"/>
    <property type="evidence" value="ECO:0007669"/>
    <property type="project" value="InterPro"/>
</dbReference>
<dbReference type="GO" id="GO:0008295">
    <property type="term" value="P:spermidine biosynthetic process"/>
    <property type="evidence" value="ECO:0007669"/>
    <property type="project" value="UniProtKB-UniRule"/>
</dbReference>
<dbReference type="CDD" id="cd06830">
    <property type="entry name" value="PLPDE_III_ADC"/>
    <property type="match status" value="1"/>
</dbReference>
<dbReference type="FunFam" id="1.10.287.3440:FF:000003">
    <property type="entry name" value="Biosynthetic arginine decarboxylase"/>
    <property type="match status" value="1"/>
</dbReference>
<dbReference type="FunFam" id="1.20.58.930:FF:000002">
    <property type="entry name" value="Biosynthetic arginine decarboxylase"/>
    <property type="match status" value="1"/>
</dbReference>
<dbReference type="FunFam" id="3.20.20.10:FF:000001">
    <property type="entry name" value="Biosynthetic arginine decarboxylase"/>
    <property type="match status" value="1"/>
</dbReference>
<dbReference type="Gene3D" id="1.10.287.3440">
    <property type="match status" value="1"/>
</dbReference>
<dbReference type="Gene3D" id="1.20.58.930">
    <property type="match status" value="1"/>
</dbReference>
<dbReference type="Gene3D" id="3.20.20.10">
    <property type="entry name" value="Alanine racemase"/>
    <property type="match status" value="1"/>
</dbReference>
<dbReference type="Gene3D" id="2.40.37.10">
    <property type="entry name" value="Lyase, Ornithine Decarboxylase, Chain A, domain 1"/>
    <property type="match status" value="1"/>
</dbReference>
<dbReference type="HAMAP" id="MF_01417">
    <property type="entry name" value="SpeA"/>
    <property type="match status" value="1"/>
</dbReference>
<dbReference type="InterPro" id="IPR009006">
    <property type="entry name" value="Ala_racemase/Decarboxylase_C"/>
</dbReference>
<dbReference type="InterPro" id="IPR040634">
    <property type="entry name" value="Arg_decarb_HB"/>
</dbReference>
<dbReference type="InterPro" id="IPR041128">
    <property type="entry name" value="Arg_decarbox_C"/>
</dbReference>
<dbReference type="InterPro" id="IPR002985">
    <property type="entry name" value="Arg_decrbxlase"/>
</dbReference>
<dbReference type="InterPro" id="IPR022657">
    <property type="entry name" value="De-COase2_CS"/>
</dbReference>
<dbReference type="InterPro" id="IPR022644">
    <property type="entry name" value="De-COase2_N"/>
</dbReference>
<dbReference type="InterPro" id="IPR022653">
    <property type="entry name" value="De-COase2_pyr-phos_BS"/>
</dbReference>
<dbReference type="InterPro" id="IPR000183">
    <property type="entry name" value="Orn/DAP/Arg_de-COase"/>
</dbReference>
<dbReference type="InterPro" id="IPR029066">
    <property type="entry name" value="PLP-binding_barrel"/>
</dbReference>
<dbReference type="NCBIfam" id="NF003763">
    <property type="entry name" value="PRK05354.1"/>
    <property type="match status" value="1"/>
</dbReference>
<dbReference type="NCBIfam" id="TIGR01273">
    <property type="entry name" value="speA"/>
    <property type="match status" value="1"/>
</dbReference>
<dbReference type="PANTHER" id="PTHR43295">
    <property type="entry name" value="ARGININE DECARBOXYLASE"/>
    <property type="match status" value="1"/>
</dbReference>
<dbReference type="PANTHER" id="PTHR43295:SF9">
    <property type="entry name" value="BIOSYNTHETIC ARGININE DECARBOXYLASE"/>
    <property type="match status" value="1"/>
</dbReference>
<dbReference type="Pfam" id="PF17810">
    <property type="entry name" value="Arg_decarb_HB"/>
    <property type="match status" value="1"/>
</dbReference>
<dbReference type="Pfam" id="PF17944">
    <property type="entry name" value="Arg_decarbox_C"/>
    <property type="match status" value="1"/>
</dbReference>
<dbReference type="Pfam" id="PF02784">
    <property type="entry name" value="Orn_Arg_deC_N"/>
    <property type="match status" value="1"/>
</dbReference>
<dbReference type="PIRSF" id="PIRSF001336">
    <property type="entry name" value="Arg_decrbxlase"/>
    <property type="match status" value="1"/>
</dbReference>
<dbReference type="PRINTS" id="PR01180">
    <property type="entry name" value="ARGDCRBXLASE"/>
</dbReference>
<dbReference type="PRINTS" id="PR01179">
    <property type="entry name" value="ODADCRBXLASE"/>
</dbReference>
<dbReference type="SUPFAM" id="SSF50621">
    <property type="entry name" value="Alanine racemase C-terminal domain-like"/>
    <property type="match status" value="1"/>
</dbReference>
<dbReference type="SUPFAM" id="SSF51419">
    <property type="entry name" value="PLP-binding barrel"/>
    <property type="match status" value="1"/>
</dbReference>
<dbReference type="PROSITE" id="PS00878">
    <property type="entry name" value="ODR_DC_2_1"/>
    <property type="match status" value="1"/>
</dbReference>
<dbReference type="PROSITE" id="PS00879">
    <property type="entry name" value="ODR_DC_2_2"/>
    <property type="match status" value="1"/>
</dbReference>
<organism>
    <name type="scientific">Phocaeicola vulgatus (strain ATCC 8482 / DSM 1447 / JCM 5826 / CCUG 4940 / NBRC 14291 / NCTC 11154)</name>
    <name type="common">Bacteroides vulgatus</name>
    <dbReference type="NCBI Taxonomy" id="435590"/>
    <lineage>
        <taxon>Bacteria</taxon>
        <taxon>Pseudomonadati</taxon>
        <taxon>Bacteroidota</taxon>
        <taxon>Bacteroidia</taxon>
        <taxon>Bacteroidales</taxon>
        <taxon>Bacteroidaceae</taxon>
        <taxon>Phocaeicola</taxon>
    </lineage>
</organism>
<sequence length="630" mass="71488">MRKWRIEDSEELYNITGWGTSYFGINDKGHVVVTPRKDGVEVDLKELVDELQLRDVAAPMLVRFPDILDNRIEKIANCFKQASDEYGYKAQNFIIYPIKVNQMRPVVEEIISHGKKFNLGLEAGSKPELHAVIAVNTDSDSLIICNGYKDESYIELALLAQKMGKRIFLVVEKMNELRLIAKMAKQLNVRPNIGIRIKLASSGSGKWEDSGGDASKFGLTSSELLEALDFLEKKDMKDCLKLIHFHIGSQVTKIRRIKTALREASQFYVQLHVMGFNVEFVDIGGGLGVDYDGTRSANSESSVNYSIQEYVNDSISTLVDASDKNGIPHPNIITESGRSLTAHHSVLIFEVLETATLPEMDEDFEVGENDHELVHELYEIWDNLNQSRMVEAWHDAQQIREEALDLFSHGIVDLKTRAQIERLYWSVTREINQIASGLKHAPDEFRKLDKLLADKYFCNFSLFQSLPDSWAIDQIFPIMPIQRLDEKPDRNATLQDITCDSDGKIANFISTRYVSHDLPVHSLKGKDAYYIGVFLVGAYQEILGDMHNLFGDTNAVHVTVDDKGYSIDQVIDGETVAEVLDYVQYNPKKLVRTLETWVTKSVKEGRISVEEGKEFLSNYRSGLYGYTYLE</sequence>
<comment type="function">
    <text evidence="1">Catalyzes the biosynthesis of agmatine from arginine.</text>
</comment>
<comment type="catalytic activity">
    <reaction evidence="1">
        <text>L-arginine + H(+) = agmatine + CO2</text>
        <dbReference type="Rhea" id="RHEA:17641"/>
        <dbReference type="ChEBI" id="CHEBI:15378"/>
        <dbReference type="ChEBI" id="CHEBI:16526"/>
        <dbReference type="ChEBI" id="CHEBI:32682"/>
        <dbReference type="ChEBI" id="CHEBI:58145"/>
        <dbReference type="EC" id="4.1.1.19"/>
    </reaction>
</comment>
<comment type="cofactor">
    <cofactor evidence="1">
        <name>Mg(2+)</name>
        <dbReference type="ChEBI" id="CHEBI:18420"/>
    </cofactor>
</comment>
<comment type="cofactor">
    <cofactor evidence="1">
        <name>pyridoxal 5'-phosphate</name>
        <dbReference type="ChEBI" id="CHEBI:597326"/>
    </cofactor>
</comment>
<comment type="pathway">
    <text evidence="1">Amine and polyamine biosynthesis; agmatine biosynthesis; agmatine from L-arginine: step 1/1.</text>
</comment>
<comment type="similarity">
    <text evidence="1">Belongs to the Orn/Lys/Arg decarboxylase class-II family. SpeA subfamily.</text>
</comment>
<name>SPEA_PHOV8</name>
<reference key="1">
    <citation type="journal article" date="2007" name="PLoS Biol.">
        <title>Evolution of symbiotic bacteria in the distal human intestine.</title>
        <authorList>
            <person name="Xu J."/>
            <person name="Mahowald M.A."/>
            <person name="Ley R.E."/>
            <person name="Lozupone C.A."/>
            <person name="Hamady M."/>
            <person name="Martens E.C."/>
            <person name="Henrissat B."/>
            <person name="Coutinho P.M."/>
            <person name="Minx P."/>
            <person name="Latreille P."/>
            <person name="Cordum H."/>
            <person name="Van Brunt A."/>
            <person name="Kim K."/>
            <person name="Fulton R.S."/>
            <person name="Fulton L.A."/>
            <person name="Clifton S.W."/>
            <person name="Wilson R.K."/>
            <person name="Knight R.D."/>
            <person name="Gordon J.I."/>
        </authorList>
    </citation>
    <scope>NUCLEOTIDE SEQUENCE [LARGE SCALE GENOMIC DNA]</scope>
    <source>
        <strain>ATCC 8482 / DSM 1447 / JCM 5826 / CCUG 4940 / NBRC 14291 / NCTC 11154</strain>
    </source>
</reference>
<protein>
    <recommendedName>
        <fullName evidence="1">Biosynthetic arginine decarboxylase</fullName>
        <shortName evidence="1">ADC</shortName>
        <ecNumber evidence="1">4.1.1.19</ecNumber>
    </recommendedName>
</protein>
<gene>
    <name evidence="1" type="primary">speA</name>
    <name type="ordered locus">BVU_1337</name>
</gene>
<keyword id="KW-0210">Decarboxylase</keyword>
<keyword id="KW-0456">Lyase</keyword>
<keyword id="KW-0460">Magnesium</keyword>
<keyword id="KW-0479">Metal-binding</keyword>
<keyword id="KW-0620">Polyamine biosynthesis</keyword>
<keyword id="KW-0663">Pyridoxal phosphate</keyword>
<keyword id="KW-0745">Spermidine biosynthesis</keyword>
<accession>A6L012</accession>